<evidence type="ECO:0000250" key="1">
    <source>
        <dbReference type="UniProtKB" id="Q96JP0"/>
    </source>
</evidence>
<evidence type="ECO:0000305" key="2"/>
<gene>
    <name evidence="1" type="primary">fem1c</name>
</gene>
<protein>
    <recommendedName>
        <fullName evidence="2">Protein fem-1 homolog C</fullName>
        <shortName evidence="1">FEM1c</shortName>
    </recommendedName>
    <alternativeName>
        <fullName>FEM1-gamma</fullName>
    </alternativeName>
</protein>
<dbReference type="EMBL" id="BC111474">
    <property type="protein sequence ID" value="AAI11475.1"/>
    <property type="molecule type" value="mRNA"/>
</dbReference>
<dbReference type="RefSeq" id="NP_001090163.1">
    <property type="nucleotide sequence ID" value="NM_001096694.1"/>
</dbReference>
<dbReference type="RefSeq" id="XP_018106323.1">
    <property type="nucleotide sequence ID" value="XM_018250834.1"/>
</dbReference>
<dbReference type="SMR" id="Q2T9K6"/>
<dbReference type="DNASU" id="735243"/>
<dbReference type="GeneID" id="735243"/>
<dbReference type="KEGG" id="xla:735243"/>
<dbReference type="AGR" id="Xenbase:XB-GENE-998532"/>
<dbReference type="CTD" id="735243"/>
<dbReference type="Xenbase" id="XB-GENE-998532">
    <property type="gene designation" value="fem1c.L"/>
</dbReference>
<dbReference type="OMA" id="FMTTEWR"/>
<dbReference type="OrthoDB" id="4429489at2759"/>
<dbReference type="UniPathway" id="UPA00143"/>
<dbReference type="Proteomes" id="UP000186698">
    <property type="component" value="Chromosome 1L"/>
</dbReference>
<dbReference type="Bgee" id="735243">
    <property type="expression patterns" value="Expressed in ovary and 19 other cell types or tissues"/>
</dbReference>
<dbReference type="GO" id="GO:0031462">
    <property type="term" value="C:Cul2-RING ubiquitin ligase complex"/>
    <property type="evidence" value="ECO:0000250"/>
    <property type="project" value="UniProtKB"/>
</dbReference>
<dbReference type="GO" id="GO:0000151">
    <property type="term" value="C:ubiquitin ligase complex"/>
    <property type="evidence" value="ECO:0000318"/>
    <property type="project" value="GO_Central"/>
</dbReference>
<dbReference type="GO" id="GO:1990756">
    <property type="term" value="F:ubiquitin-like ligase-substrate adaptor activity"/>
    <property type="evidence" value="ECO:0000250"/>
    <property type="project" value="UniProtKB"/>
</dbReference>
<dbReference type="GO" id="GO:0043161">
    <property type="term" value="P:proteasome-mediated ubiquitin-dependent protein catabolic process"/>
    <property type="evidence" value="ECO:0000250"/>
    <property type="project" value="UniProtKB"/>
</dbReference>
<dbReference type="GO" id="GO:0016567">
    <property type="term" value="P:protein ubiquitination"/>
    <property type="evidence" value="ECO:0007669"/>
    <property type="project" value="UniProtKB-UniPathway"/>
</dbReference>
<dbReference type="GO" id="GO:0140627">
    <property type="term" value="P:ubiquitin-dependent protein catabolic process via the C-end degron rule pathway"/>
    <property type="evidence" value="ECO:0000250"/>
    <property type="project" value="UniProtKB"/>
</dbReference>
<dbReference type="FunFam" id="1.25.40.10:FF:000104">
    <property type="entry name" value="Fem-1 homolog c (C.elegans)"/>
    <property type="match status" value="1"/>
</dbReference>
<dbReference type="FunFam" id="1.25.40.20:FF:000076">
    <property type="entry name" value="Fem-1 homolog c (C.elegans)"/>
    <property type="match status" value="1"/>
</dbReference>
<dbReference type="FunFam" id="1.25.40.20:FF:000163">
    <property type="entry name" value="Fem-1 homolog c (C.elegans)"/>
    <property type="match status" value="1"/>
</dbReference>
<dbReference type="FunFam" id="1.25.40.20:FF:000173">
    <property type="entry name" value="Fem-1 homolog c (C.elegans)"/>
    <property type="match status" value="1"/>
</dbReference>
<dbReference type="Gene3D" id="1.25.40.20">
    <property type="entry name" value="Ankyrin repeat-containing domain"/>
    <property type="match status" value="3"/>
</dbReference>
<dbReference type="Gene3D" id="1.25.40.10">
    <property type="entry name" value="Tetratricopeptide repeat domain"/>
    <property type="match status" value="1"/>
</dbReference>
<dbReference type="InterPro" id="IPR002110">
    <property type="entry name" value="Ankyrin_rpt"/>
</dbReference>
<dbReference type="InterPro" id="IPR036770">
    <property type="entry name" value="Ankyrin_rpt-contain_sf"/>
</dbReference>
<dbReference type="InterPro" id="IPR011990">
    <property type="entry name" value="TPR-like_helical_dom_sf"/>
</dbReference>
<dbReference type="PANTHER" id="PTHR24173">
    <property type="entry name" value="ANKYRIN REPEAT CONTAINING"/>
    <property type="match status" value="1"/>
</dbReference>
<dbReference type="PANTHER" id="PTHR24173:SF74">
    <property type="entry name" value="ANKYRIN REPEAT DOMAIN-CONTAINING PROTEIN 16"/>
    <property type="match status" value="1"/>
</dbReference>
<dbReference type="Pfam" id="PF12796">
    <property type="entry name" value="Ank_2"/>
    <property type="match status" value="3"/>
</dbReference>
<dbReference type="Pfam" id="PF13857">
    <property type="entry name" value="Ank_5"/>
    <property type="match status" value="1"/>
</dbReference>
<dbReference type="PRINTS" id="PR01415">
    <property type="entry name" value="ANKYRIN"/>
</dbReference>
<dbReference type="SMART" id="SM00248">
    <property type="entry name" value="ANK"/>
    <property type="match status" value="9"/>
</dbReference>
<dbReference type="SUPFAM" id="SSF48403">
    <property type="entry name" value="Ankyrin repeat"/>
    <property type="match status" value="2"/>
</dbReference>
<dbReference type="SUPFAM" id="SSF48452">
    <property type="entry name" value="TPR-like"/>
    <property type="match status" value="1"/>
</dbReference>
<dbReference type="PROSITE" id="PS50297">
    <property type="entry name" value="ANK_REP_REGION"/>
    <property type="match status" value="2"/>
</dbReference>
<dbReference type="PROSITE" id="PS50088">
    <property type="entry name" value="ANK_REPEAT"/>
    <property type="match status" value="7"/>
</dbReference>
<name>FEM1C_XENLA</name>
<sequence>MDLKTAVFNAARDGKLRLLSKLLENKAKDDVVLLMSEKTNGATPLLMAARYGHLDMVDYLLDQCSASVEIGGSVNFDGETIEGAPPLWAASAAGHLKVVRSLLVHGASVNNTTLTNSTPLRAACFDGHLEIVKYLVEHKADLEVANRHGHTCLMISCYKGHKEIAQFLLEKGADVNRKSVKGNTALHDCAESGSLEIMQMLLKYGARMEKDGYGMTPLLSASVTGHTNIVDFLTQNPQTSKNERINALELLGATFVDKKRDLLGALKYWKRAMDMRHSDRTNIVSKPEPQTLIMAYDYAREVNTAEELDNLIADPDEMRMQALLIRERILGPSHPDTSYYIRYRGAVYADSGNFKRCINLWKYALDMQQNNLDPLSPMTASSLLSFAELFSFMLQDRAKGLLGTTVTFDDLMGILCKSVMEIDRAVKQTAPPPDQVQLNKALSIILHLICLLEKVPCSPDQDHFKKQNIYRFLKLHPKGKNNFSPLHLAVDKNTTCVGRYPVCKFPSFQVTAILLECGADVNVRDAEQNSPLHVAALNNHPDIMNLLVKSGAHFDSTNSHNQTACDLLDEKEMAKNLIQPINHTTLQCLAARVIVKHNIQYKQEIPEKLESFVLLHR</sequence>
<organism>
    <name type="scientific">Xenopus laevis</name>
    <name type="common">African clawed frog</name>
    <dbReference type="NCBI Taxonomy" id="8355"/>
    <lineage>
        <taxon>Eukaryota</taxon>
        <taxon>Metazoa</taxon>
        <taxon>Chordata</taxon>
        <taxon>Craniata</taxon>
        <taxon>Vertebrata</taxon>
        <taxon>Euteleostomi</taxon>
        <taxon>Amphibia</taxon>
        <taxon>Batrachia</taxon>
        <taxon>Anura</taxon>
        <taxon>Pipoidea</taxon>
        <taxon>Pipidae</taxon>
        <taxon>Xenopodinae</taxon>
        <taxon>Xenopus</taxon>
        <taxon>Xenopus</taxon>
    </lineage>
</organism>
<accession>Q2T9K6</accession>
<comment type="function">
    <text evidence="1">Substrate-recognition component of a Cul2-RING (CRL2) E3 ubiquitin-protein ligase complex of the DesCEND (destruction via C-end degrons) pathway, which recognizes a C-degron located at the extreme C terminus of target proteins, leading to their ubiquitination and degradation. The C-degron recognized by the DesCEND pathway is usually a motif of less than ten residues and can be present in full-length proteins, truncated proteins or proteolytically cleaved forms. The CRL2(FEM1C) complex specifically recognizes proteins with an arginine at the C-terminus: recognizes and binds proteins ending with -Lys/Arg-Xaa-Arg and -Lys/Arg-Xaa-Xaa-Arg C-degrons, leading to their ubiquitination and degradation.</text>
</comment>
<comment type="pathway">
    <text evidence="1">Protein modification; protein ubiquitination.</text>
</comment>
<comment type="subunit">
    <text evidence="1">Component of a CRL2 E3 ubiquitin-protein ligase complex, also named ECS (Elongin BC-CUL2/5-SOCS-box protein) complex.</text>
</comment>
<comment type="domain">
    <text evidence="1">The first seven ANK repeats at the N-terminus (1-242) are essnetial for recognition of Lys/Arg-Xaa-Arg and -Lys/Arg-Xaa-Xaa-Arg C-degrons.</text>
</comment>
<comment type="similarity">
    <text evidence="2">Belongs to the fem-1 family.</text>
</comment>
<reference key="1">
    <citation type="submission" date="2005-12" db="EMBL/GenBank/DDBJ databases">
        <authorList>
            <consortium name="NIH - Xenopus Gene Collection (XGC) project"/>
        </authorList>
    </citation>
    <scope>NUCLEOTIDE SEQUENCE [LARGE SCALE MRNA]</scope>
    <source>
        <tissue>Embryo</tissue>
    </source>
</reference>
<keyword id="KW-0040">ANK repeat</keyword>
<keyword id="KW-1185">Reference proteome</keyword>
<keyword id="KW-0677">Repeat</keyword>
<keyword id="KW-0802">TPR repeat</keyword>
<keyword id="KW-0833">Ubl conjugation pathway</keyword>
<feature type="chain" id="PRO_0000324539" description="Protein fem-1 homolog C">
    <location>
        <begin position="1"/>
        <end position="617"/>
    </location>
</feature>
<feature type="repeat" description="ANK 1">
    <location>
        <begin position="2"/>
        <end position="31"/>
    </location>
</feature>
<feature type="repeat" description="ANK 2">
    <location>
        <begin position="40"/>
        <end position="70"/>
    </location>
</feature>
<feature type="repeat" description="ANK 3">
    <location>
        <begin position="82"/>
        <end position="111"/>
    </location>
</feature>
<feature type="repeat" description="ANK 4">
    <location>
        <begin position="115"/>
        <end position="144"/>
    </location>
</feature>
<feature type="repeat" description="ANK 5">
    <location>
        <begin position="148"/>
        <end position="177"/>
    </location>
</feature>
<feature type="repeat" description="ANK 6">
    <location>
        <begin position="181"/>
        <end position="210"/>
    </location>
</feature>
<feature type="repeat" description="ANK 7">
    <location>
        <begin position="213"/>
        <end position="242"/>
    </location>
</feature>
<feature type="repeat" description="TPR 1">
    <location>
        <begin position="245"/>
        <end position="279"/>
    </location>
</feature>
<feature type="repeat" description="TPR 2">
    <location>
        <begin position="338"/>
        <end position="371"/>
    </location>
</feature>
<feature type="repeat" description="ANK 8">
    <location>
        <begin position="481"/>
        <end position="523"/>
    </location>
</feature>
<feature type="repeat" description="ANK 9">
    <location>
        <begin position="527"/>
        <end position="556"/>
    </location>
</feature>
<proteinExistence type="evidence at transcript level"/>